<evidence type="ECO:0000255" key="1">
    <source>
        <dbReference type="HAMAP-Rule" id="MF_00536"/>
    </source>
</evidence>
<feature type="chain" id="PRO_1000051496" description="4-hydroxythreonine-4-phosphate dehydrogenase">
    <location>
        <begin position="1"/>
        <end position="329"/>
    </location>
</feature>
<feature type="binding site" evidence="1">
    <location>
        <position position="136"/>
    </location>
    <ligand>
        <name>substrate</name>
    </ligand>
</feature>
<feature type="binding site" evidence="1">
    <location>
        <position position="137"/>
    </location>
    <ligand>
        <name>substrate</name>
    </ligand>
</feature>
<feature type="binding site" evidence="1">
    <location>
        <position position="166"/>
    </location>
    <ligand>
        <name>a divalent metal cation</name>
        <dbReference type="ChEBI" id="CHEBI:60240"/>
        <note>ligand shared between dimeric partners</note>
    </ligand>
</feature>
<feature type="binding site" evidence="1">
    <location>
        <position position="211"/>
    </location>
    <ligand>
        <name>a divalent metal cation</name>
        <dbReference type="ChEBI" id="CHEBI:60240"/>
        <note>ligand shared between dimeric partners</note>
    </ligand>
</feature>
<feature type="binding site" evidence="1">
    <location>
        <position position="266"/>
    </location>
    <ligand>
        <name>a divalent metal cation</name>
        <dbReference type="ChEBI" id="CHEBI:60240"/>
        <note>ligand shared between dimeric partners</note>
    </ligand>
</feature>
<feature type="binding site" evidence="1">
    <location>
        <position position="274"/>
    </location>
    <ligand>
        <name>substrate</name>
    </ligand>
</feature>
<feature type="binding site" evidence="1">
    <location>
        <position position="283"/>
    </location>
    <ligand>
        <name>substrate</name>
    </ligand>
</feature>
<feature type="binding site" evidence="1">
    <location>
        <position position="292"/>
    </location>
    <ligand>
        <name>substrate</name>
    </ligand>
</feature>
<dbReference type="EC" id="1.1.1.262" evidence="1"/>
<dbReference type="EMBL" id="CP000822">
    <property type="protein sequence ID" value="ABV14411.1"/>
    <property type="molecule type" value="Genomic_DNA"/>
</dbReference>
<dbReference type="RefSeq" id="WP_012134114.1">
    <property type="nucleotide sequence ID" value="NC_009792.1"/>
</dbReference>
<dbReference type="SMR" id="A8ALP8"/>
<dbReference type="STRING" id="290338.CKO_03328"/>
<dbReference type="GeneID" id="45137093"/>
<dbReference type="KEGG" id="cko:CKO_03328"/>
<dbReference type="HOGENOM" id="CLU_040168_1_0_6"/>
<dbReference type="OrthoDB" id="9801783at2"/>
<dbReference type="UniPathway" id="UPA00244">
    <property type="reaction ID" value="UER00312"/>
</dbReference>
<dbReference type="Proteomes" id="UP000008148">
    <property type="component" value="Chromosome"/>
</dbReference>
<dbReference type="GO" id="GO:0005737">
    <property type="term" value="C:cytoplasm"/>
    <property type="evidence" value="ECO:0007669"/>
    <property type="project" value="UniProtKB-SubCell"/>
</dbReference>
<dbReference type="GO" id="GO:0050570">
    <property type="term" value="F:4-hydroxythreonine-4-phosphate dehydrogenase activity"/>
    <property type="evidence" value="ECO:0007669"/>
    <property type="project" value="UniProtKB-UniRule"/>
</dbReference>
<dbReference type="GO" id="GO:0050897">
    <property type="term" value="F:cobalt ion binding"/>
    <property type="evidence" value="ECO:0007669"/>
    <property type="project" value="UniProtKB-UniRule"/>
</dbReference>
<dbReference type="GO" id="GO:0000287">
    <property type="term" value="F:magnesium ion binding"/>
    <property type="evidence" value="ECO:0007669"/>
    <property type="project" value="UniProtKB-UniRule"/>
</dbReference>
<dbReference type="GO" id="GO:0051287">
    <property type="term" value="F:NAD binding"/>
    <property type="evidence" value="ECO:0007669"/>
    <property type="project" value="InterPro"/>
</dbReference>
<dbReference type="GO" id="GO:0008270">
    <property type="term" value="F:zinc ion binding"/>
    <property type="evidence" value="ECO:0007669"/>
    <property type="project" value="UniProtKB-UniRule"/>
</dbReference>
<dbReference type="GO" id="GO:0042823">
    <property type="term" value="P:pyridoxal phosphate biosynthetic process"/>
    <property type="evidence" value="ECO:0007669"/>
    <property type="project" value="UniProtKB-UniRule"/>
</dbReference>
<dbReference type="GO" id="GO:0008615">
    <property type="term" value="P:pyridoxine biosynthetic process"/>
    <property type="evidence" value="ECO:0007669"/>
    <property type="project" value="UniProtKB-UniRule"/>
</dbReference>
<dbReference type="FunFam" id="3.40.718.10:FF:000010">
    <property type="entry name" value="4-hydroxythreonine-4-phosphate dehydrogenase"/>
    <property type="match status" value="1"/>
</dbReference>
<dbReference type="Gene3D" id="3.40.718.10">
    <property type="entry name" value="Isopropylmalate Dehydrogenase"/>
    <property type="match status" value="1"/>
</dbReference>
<dbReference type="HAMAP" id="MF_00536">
    <property type="entry name" value="PdxA"/>
    <property type="match status" value="1"/>
</dbReference>
<dbReference type="InterPro" id="IPR037510">
    <property type="entry name" value="PdxA"/>
</dbReference>
<dbReference type="InterPro" id="IPR005255">
    <property type="entry name" value="PdxA_fam"/>
</dbReference>
<dbReference type="NCBIfam" id="TIGR00557">
    <property type="entry name" value="pdxA"/>
    <property type="match status" value="1"/>
</dbReference>
<dbReference type="PANTHER" id="PTHR30004">
    <property type="entry name" value="4-HYDROXYTHREONINE-4-PHOSPHATE DEHYDROGENASE"/>
    <property type="match status" value="1"/>
</dbReference>
<dbReference type="PANTHER" id="PTHR30004:SF5">
    <property type="entry name" value="4-HYDROXYTHREONINE-4-PHOSPHATE DEHYDROGENASE"/>
    <property type="match status" value="1"/>
</dbReference>
<dbReference type="Pfam" id="PF04166">
    <property type="entry name" value="PdxA"/>
    <property type="match status" value="1"/>
</dbReference>
<dbReference type="SUPFAM" id="SSF53659">
    <property type="entry name" value="Isocitrate/Isopropylmalate dehydrogenase-like"/>
    <property type="match status" value="1"/>
</dbReference>
<protein>
    <recommendedName>
        <fullName evidence="1">4-hydroxythreonine-4-phosphate dehydrogenase</fullName>
        <ecNumber evidence="1">1.1.1.262</ecNumber>
    </recommendedName>
    <alternativeName>
        <fullName evidence="1">4-(phosphohydroxy)-L-threonine dehydrogenase</fullName>
    </alternativeName>
</protein>
<name>PDXA_CITK8</name>
<reference key="1">
    <citation type="submission" date="2007-08" db="EMBL/GenBank/DDBJ databases">
        <authorList>
            <consortium name="The Citrobacter koseri Genome Sequencing Project"/>
            <person name="McClelland M."/>
            <person name="Sanderson E.K."/>
            <person name="Porwollik S."/>
            <person name="Spieth J."/>
            <person name="Clifton W.S."/>
            <person name="Latreille P."/>
            <person name="Courtney L."/>
            <person name="Wang C."/>
            <person name="Pepin K."/>
            <person name="Bhonagiri V."/>
            <person name="Nash W."/>
            <person name="Johnson M."/>
            <person name="Thiruvilangam P."/>
            <person name="Wilson R."/>
        </authorList>
    </citation>
    <scope>NUCLEOTIDE SEQUENCE [LARGE SCALE GENOMIC DNA]</scope>
    <source>
        <strain>ATCC BAA-895 / CDC 4225-83 / SGSC4696</strain>
    </source>
</reference>
<comment type="function">
    <text evidence="1">Catalyzes the NAD(P)-dependent oxidation of 4-(phosphooxy)-L-threonine (HTP) into 2-amino-3-oxo-4-(phosphooxy)butyric acid which spontaneously decarboxylates to form 3-amino-2-oxopropyl phosphate (AHAP).</text>
</comment>
<comment type="catalytic activity">
    <reaction evidence="1">
        <text>4-(phosphooxy)-L-threonine + NAD(+) = 3-amino-2-oxopropyl phosphate + CO2 + NADH</text>
        <dbReference type="Rhea" id="RHEA:32275"/>
        <dbReference type="ChEBI" id="CHEBI:16526"/>
        <dbReference type="ChEBI" id="CHEBI:57279"/>
        <dbReference type="ChEBI" id="CHEBI:57540"/>
        <dbReference type="ChEBI" id="CHEBI:57945"/>
        <dbReference type="ChEBI" id="CHEBI:58452"/>
        <dbReference type="EC" id="1.1.1.262"/>
    </reaction>
</comment>
<comment type="cofactor">
    <cofactor evidence="1">
        <name>Zn(2+)</name>
        <dbReference type="ChEBI" id="CHEBI:29105"/>
    </cofactor>
    <cofactor evidence="1">
        <name>Mg(2+)</name>
        <dbReference type="ChEBI" id="CHEBI:18420"/>
    </cofactor>
    <cofactor evidence="1">
        <name>Co(2+)</name>
        <dbReference type="ChEBI" id="CHEBI:48828"/>
    </cofactor>
    <text evidence="1">Binds 1 divalent metal cation per subunit. Can use ions such as Zn(2+), Mg(2+) or Co(2+).</text>
</comment>
<comment type="pathway">
    <text evidence="1">Cofactor biosynthesis; pyridoxine 5'-phosphate biosynthesis; pyridoxine 5'-phosphate from D-erythrose 4-phosphate: step 4/5.</text>
</comment>
<comment type="subunit">
    <text evidence="1">Homodimer.</text>
</comment>
<comment type="subcellular location">
    <subcellularLocation>
        <location evidence="1">Cytoplasm</location>
    </subcellularLocation>
</comment>
<comment type="miscellaneous">
    <text evidence="1">The active site is located at the dimer interface.</text>
</comment>
<comment type="similarity">
    <text evidence="1">Belongs to the PdxA family.</text>
</comment>
<gene>
    <name evidence="1" type="primary">pdxA</name>
    <name type="ordered locus">CKO_03328</name>
</gene>
<proteinExistence type="inferred from homology"/>
<accession>A8ALP8</accession>
<keyword id="KW-0170">Cobalt</keyword>
<keyword id="KW-0963">Cytoplasm</keyword>
<keyword id="KW-0460">Magnesium</keyword>
<keyword id="KW-0479">Metal-binding</keyword>
<keyword id="KW-0520">NAD</keyword>
<keyword id="KW-0521">NADP</keyword>
<keyword id="KW-0560">Oxidoreductase</keyword>
<keyword id="KW-0664">Pyridoxine biosynthesis</keyword>
<keyword id="KW-1185">Reference proteome</keyword>
<keyword id="KW-0862">Zinc</keyword>
<organism>
    <name type="scientific">Citrobacter koseri (strain ATCC BAA-895 / CDC 4225-83 / SGSC4696)</name>
    <dbReference type="NCBI Taxonomy" id="290338"/>
    <lineage>
        <taxon>Bacteria</taxon>
        <taxon>Pseudomonadati</taxon>
        <taxon>Pseudomonadota</taxon>
        <taxon>Gammaproteobacteria</taxon>
        <taxon>Enterobacterales</taxon>
        <taxon>Enterobacteriaceae</taxon>
        <taxon>Citrobacter</taxon>
    </lineage>
</organism>
<sequence>MATVQRVVITPGEPAGIGPDLVVQLAQREWPVELVVCADARLLTDRAALLGLPLSLLPYSPNHPAKPQSAGTLTLLPTALRAPVTPGQLSVENGQYVVDTLARACDGCLQGEFAALITGPVHKGVINDAGVPFTGHTEFFEARSQAKKVVMMLATEELRVALATTHLPLRAVADAITPALLHEVIGILHHDLRTKFGLADPHILVCGLNPHAGEGGHMGTEEIDTIVPVLDDLRAQGMRLSGPLPADTLFQPKYLDHADAVLAMYHDQGLPVLKYQGFGRGVNITLGLPFIRTSVDHGTALELAGRGQADVGSFITALNLAIKMIVNTQ</sequence>